<protein>
    <recommendedName>
        <fullName evidence="21">Endothelin receptor type B</fullName>
        <shortName>ET-B</shortName>
        <shortName>ET-BR</shortName>
    </recommendedName>
    <alternativeName>
        <fullName>Endothelin receptor non-selective type</fullName>
    </alternativeName>
</protein>
<feature type="signal peptide" evidence="2">
    <location>
        <begin position="1"/>
        <end position="26"/>
    </location>
</feature>
<feature type="chain" id="PRO_0000012729" description="Endothelin receptor type B">
    <location>
        <begin position="27"/>
        <end position="442"/>
    </location>
</feature>
<feature type="topological domain" description="Extracellular" evidence="2">
    <location>
        <begin position="27"/>
        <end position="101"/>
    </location>
</feature>
<feature type="transmembrane region" description="Helical; Name=1" evidence="2">
    <location>
        <begin position="102"/>
        <end position="126"/>
    </location>
</feature>
<feature type="topological domain" description="Cytoplasmic" evidence="2">
    <location>
        <begin position="127"/>
        <end position="137"/>
    </location>
</feature>
<feature type="transmembrane region" description="Helical; Name=2" evidence="2">
    <location>
        <begin position="138"/>
        <end position="163"/>
    </location>
</feature>
<feature type="topological domain" description="Extracellular" evidence="2">
    <location>
        <begin position="164"/>
        <end position="175"/>
    </location>
</feature>
<feature type="transmembrane region" description="Helical; Name=3" evidence="2">
    <location>
        <begin position="176"/>
        <end position="197"/>
    </location>
</feature>
<feature type="topological domain" description="Cytoplasmic" evidence="2">
    <location>
        <begin position="198"/>
        <end position="218"/>
    </location>
</feature>
<feature type="transmembrane region" description="Helical; Name=4" evidence="2">
    <location>
        <begin position="219"/>
        <end position="243"/>
    </location>
</feature>
<feature type="topological domain" description="Extracellular" evidence="2">
    <location>
        <begin position="244"/>
        <end position="271"/>
    </location>
</feature>
<feature type="transmembrane region" description="Helical; Name=5" evidence="2">
    <location>
        <begin position="272"/>
        <end position="296"/>
    </location>
</feature>
<feature type="topological domain" description="Cytoplasmic" evidence="2">
    <location>
        <begin position="297"/>
        <end position="324"/>
    </location>
</feature>
<feature type="transmembrane region" description="Helical; Name=6" evidence="2">
    <location>
        <begin position="325"/>
        <end position="350"/>
    </location>
</feature>
<feature type="topological domain" description="Extracellular" evidence="2">
    <location>
        <begin position="351"/>
        <end position="362"/>
    </location>
</feature>
<feature type="transmembrane region" description="Helical; Name=7" evidence="2">
    <location>
        <begin position="363"/>
        <end position="389"/>
    </location>
</feature>
<feature type="topological domain" description="Cytoplasmic" evidence="2">
    <location>
        <begin position="390"/>
        <end position="442"/>
    </location>
</feature>
<feature type="region of interest" description="Disordered" evidence="4">
    <location>
        <begin position="69"/>
        <end position="88"/>
    </location>
</feature>
<feature type="modified residue" description="Phosphoserine" evidence="1">
    <location>
        <position position="305"/>
    </location>
</feature>
<feature type="modified residue" description="Phosphoserine" evidence="1">
    <location>
        <position position="419"/>
    </location>
</feature>
<feature type="modified residue" description="Phosphotyrosine" evidence="1">
    <location>
        <position position="439"/>
    </location>
</feature>
<feature type="modified residue" description="Phosphoserine" evidence="1">
    <location>
        <position position="440"/>
    </location>
</feature>
<feature type="modified residue" description="Phosphoserine" evidence="1">
    <location>
        <position position="441"/>
    </location>
</feature>
<feature type="modified residue" description="Phosphoserine" evidence="1">
    <location>
        <position position="442"/>
    </location>
</feature>
<feature type="lipid moiety-binding region" description="S-palmitoyl cysteine" evidence="15">
    <location>
        <position position="402"/>
    </location>
</feature>
<feature type="lipid moiety-binding region" description="S-palmitoyl cysteine" evidence="2">
    <location>
        <position position="403"/>
    </location>
</feature>
<feature type="lipid moiety-binding region" description="S-palmitoyl cysteine" evidence="2">
    <location>
        <position position="405"/>
    </location>
</feature>
<feature type="glycosylation site" description="N-linked (GlcNAc...) asparagine" evidence="2">
    <location>
        <position position="59"/>
    </location>
</feature>
<feature type="disulfide bond" evidence="3">
    <location>
        <begin position="174"/>
        <end position="255"/>
    </location>
</feature>
<feature type="splice variant" id="VSP_001878" description="In isoform C." evidence="19">
    <original>M</original>
    <variation>MNKSTCLMAAETPSKRWRLHCLAFSQRFVRAGPACSSREACSSPRAGWNPAGFRLPGRWSPFVALHLVCQIREALKLRSGHRTPSGAGSSM</variation>
    <location>
        <position position="1"/>
    </location>
</feature>
<feature type="splice variant" id="VSP_001879" description="In isoform B." evidence="20">
    <original>SCLCCWCQSFEEKQSLEEKQSCLKFKANDHGYDNFRSSNKYSSS</original>
    <variation>AGPHVGNKLVMLFSVNIECDGTVNQNPTMWPERKSNNN</variation>
    <location>
        <begin position="399"/>
        <end position="442"/>
    </location>
</feature>
<feature type="sequence variant" id="VAR_019285" description="In dbSNP:rs12720160." evidence="18">
    <original>P</original>
    <variation>T</variation>
    <location>
        <position position="5"/>
    </location>
</feature>
<feature type="sequence variant" id="VAR_014675" description="In dbSNP:rs5345.">
    <original>L</original>
    <variation>Q</variation>
    <location>
        <position position="7"/>
    </location>
</feature>
<feature type="sequence variant" id="VAR_014676" description="No effect on cell membrane location; dbSNP:rs5346." evidence="8">
    <original>L</original>
    <variation>F</variation>
    <location>
        <position position="17"/>
    </location>
</feature>
<feature type="sequence variant" id="VAR_078312" description="Found in patients with Waardenburg syndrome 2; likely pathogenic; loss of cell membrane location; new cytoplasmic location." evidence="8">
    <original>L</original>
    <variation>P</variation>
    <location>
        <position position="17"/>
    </location>
</feature>
<feature type="sequence variant" id="VAR_003469" description="Probable risk factor for Hirschsprung disease; sex-dependent gene dosage effect; dbSNP:rs1801710." evidence="5 11 14 17">
    <original>G</original>
    <variation>S</variation>
    <location>
        <position position="57"/>
    </location>
</feature>
<feature type="sequence variant" id="VAR_024255" description="In dbSNP:rs2228271.">
    <original>R</original>
    <variation>M</variation>
    <location>
        <position position="76"/>
    </location>
</feature>
<feature type="sequence variant" id="VAR_014677" description="In dbSNP:rs5347.">
    <original>F</original>
    <variation>V</variation>
    <location>
        <position position="112"/>
    </location>
</feature>
<feature type="sequence variant" id="VAR_078313" description="Found in patients with Waardenburg syndrome 2; likely pathogenic; decreased calcium release upon endothelin 3 exposure; loss of downstream pathway activation upon endothelin 3 exposure; no effect on cell membrane location; no effect on internalization upon endothelin 3 exposure." evidence="8">
    <original>N</original>
    <variation>Y</variation>
    <location>
        <position position="137"/>
    </location>
</feature>
<feature type="sequence variant" id="VAR_078314" description="Found in patients with Waardenburg syndrome 2; likely pathogenic; loss of cell membrane location; new cytoplasmic location." evidence="8">
    <original>P</original>
    <variation>R</variation>
    <location>
        <position position="156"/>
    </location>
</feature>
<feature type="sequence variant" id="VAR_003470" description="In WS4A; dbSNP:rs104894388." evidence="12">
    <original>A</original>
    <variation>G</variation>
    <location>
        <position position="183"/>
    </location>
</feature>
<feature type="sequence variant" id="VAR_078315" description="Found in patients with Waardenburg syndrome 2; likely pathogenic; loss of cell membrane location; new cytoplasmic location." evidence="8">
    <location>
        <begin position="226"/>
        <end position="442"/>
    </location>
</feature>
<feature type="sequence variant" id="VAR_014678" description="In dbSNP:rs5350.">
    <original>T</original>
    <variation>M</variation>
    <location>
        <position position="244"/>
    </location>
</feature>
<feature type="sequence variant" id="VAR_003471" description="In HSCR2; dbSNP:rs104894387." evidence="10">
    <original>W</original>
    <variation>C</variation>
    <location>
        <position position="276"/>
    </location>
</feature>
<feature type="sequence variant" id="VAR_015294" description="In WS4A." evidence="7">
    <original>F</original>
    <variation>L</variation>
    <location>
        <position position="292"/>
    </location>
</feature>
<feature type="sequence variant" id="VAR_003472" description="In dbSNP:rs5352." evidence="13 18">
    <original>S</original>
    <variation>N</variation>
    <location>
        <position position="305"/>
    </location>
</feature>
<feature type="sequence variant" id="VAR_003473" description="In HSCR2; sporadic; dbSNP:rs200363611." evidence="5 14">
    <original>R</original>
    <variation>W</variation>
    <location>
        <position position="319"/>
    </location>
</feature>
<feature type="sequence variant" id="VAR_003474" description="In HSCR2; decreased calcium release; no effect on cell membrane location." evidence="8 11">
    <original>M</original>
    <variation>I</variation>
    <location>
        <position position="374"/>
    </location>
</feature>
<feature type="sequence variant" id="VAR_003475" description="In HSCR2; familial; loss of cell membrane location; new cytoplasmic location." evidence="5 8 14">
    <original>P</original>
    <variation>L</variation>
    <location>
        <position position="383"/>
    </location>
</feature>
<feature type="mutagenesis site" description="Abolishes palmitoylation; when associated with S-403 and S-405." evidence="15">
    <original>C</original>
    <variation>S</variation>
    <location>
        <position position="402"/>
    </location>
</feature>
<feature type="mutagenesis site" description="Abolishes palmitoylation; when associated with S-402 and S-405." evidence="15">
    <original>C</original>
    <variation>S</variation>
    <location>
        <position position="403"/>
    </location>
</feature>
<feature type="mutagenesis site" description="Abolishes palmitoylation; when associated with S-402 and S-403." evidence="15">
    <original>C</original>
    <variation>S</variation>
    <location>
        <position position="405"/>
    </location>
</feature>
<feature type="sequence conflict" description="In Ref. 3; AAB19411." evidence="21" ref="3">
    <original>R</original>
    <variation>P</variation>
    <location>
        <position position="10"/>
    </location>
</feature>
<feature type="sequence conflict" description="In Ref. 8." evidence="21" ref="8">
    <original>V</original>
    <variation>L</variation>
    <location>
        <position position="16"/>
    </location>
</feature>
<feature type="sequence conflict" description="In Ref. 8." evidence="21" ref="8">
    <original>SRI</original>
    <variation>LGV</variation>
    <location>
        <begin position="22"/>
        <end position="24"/>
    </location>
</feature>
<feature type="sequence conflict" description="In Ref. 8." evidence="21" ref="8">
    <original>R</original>
    <variation>K</variation>
    <location>
        <position position="35"/>
    </location>
</feature>
<feature type="sequence conflict" description="In Ref. 12; BAD92435." evidence="21" ref="12">
    <original>I</original>
    <variation>M</variation>
    <location>
        <position position="45"/>
    </location>
</feature>
<feature type="sequence conflict" description="In Ref. 13; BAF83388." evidence="21" ref="13">
    <original>S</original>
    <variation>P</variation>
    <location>
        <position position="58"/>
    </location>
</feature>
<feature type="sequence conflict" description="In Ref. 8." evidence="21" ref="8">
    <original>I</original>
    <variation>V</variation>
    <location>
        <position position="140"/>
    </location>
</feature>
<feature type="sequence conflict" description="In Ref. 13; BAF83388." evidence="21" ref="13">
    <original>A</original>
    <variation>V</variation>
    <location>
        <position position="385"/>
    </location>
</feature>
<feature type="helix" evidence="25">
    <location>
        <begin position="98"/>
        <end position="128"/>
    </location>
</feature>
<feature type="helix" evidence="25">
    <location>
        <begin position="130"/>
        <end position="132"/>
    </location>
</feature>
<feature type="helix" evidence="25">
    <location>
        <begin position="135"/>
        <end position="164"/>
    </location>
</feature>
<feature type="helix" evidence="25">
    <location>
        <begin position="170"/>
        <end position="204"/>
    </location>
</feature>
<feature type="strand" evidence="25">
    <location>
        <begin position="206"/>
        <end position="208"/>
    </location>
</feature>
<feature type="strand" evidence="24">
    <location>
        <begin position="212"/>
        <end position="214"/>
    </location>
</feature>
<feature type="helix" evidence="25">
    <location>
        <begin position="216"/>
        <end position="232"/>
    </location>
</feature>
<feature type="helix" evidence="25">
    <location>
        <begin position="234"/>
        <end position="239"/>
    </location>
</feature>
<feature type="strand" evidence="25">
    <location>
        <begin position="240"/>
        <end position="247"/>
    </location>
</feature>
<feature type="strand" evidence="25">
    <location>
        <begin position="250"/>
        <end position="257"/>
    </location>
</feature>
<feature type="helix" evidence="25">
    <location>
        <begin position="264"/>
        <end position="281"/>
    </location>
</feature>
<feature type="helix" evidence="25">
    <location>
        <begin position="283"/>
        <end position="310"/>
    </location>
</feature>
<feature type="helix" evidence="25">
    <location>
        <begin position="313"/>
        <end position="349"/>
    </location>
</feature>
<feature type="strand" evidence="23">
    <location>
        <begin position="352"/>
        <end position="354"/>
    </location>
</feature>
<feature type="turn" evidence="25">
    <location>
        <begin position="355"/>
        <end position="357"/>
    </location>
</feature>
<feature type="helix" evidence="25">
    <location>
        <begin position="358"/>
        <end position="389"/>
    </location>
</feature>
<feature type="helix" evidence="25">
    <location>
        <begin position="391"/>
        <end position="401"/>
    </location>
</feature>
<feature type="sequence conflict" description="In Ref. 10; AAD24541." evidence="21" ref="10">
    <original>SGHRTP</original>
    <variation>RPPDA</variation>
    <location sequence="P24530-3">
        <begin position="79"/>
        <end position="84"/>
    </location>
</feature>
<gene>
    <name evidence="22" type="primary">EDNRB</name>
    <name type="synonym">ETRB</name>
</gene>
<accession>P24530</accession>
<accession>A2A2Z8</accession>
<accession>A8K3T4</accession>
<accession>O15343</accession>
<accession>Q59GB1</accession>
<accession>Q5W0G9</accession>
<accession>Q8NHM6</accession>
<accession>Q8NHM7</accession>
<accession>Q8NHM8</accession>
<accession>Q8NHM9</accession>
<accession>Q9UD23</accession>
<accession>Q9UQK3</accession>
<comment type="function">
    <text evidence="9">Non-specific receptor for endothelin 1, 2, and 3. Mediates its action by association with G proteins that activate a phosphatidylinositol-calcium second messenger system.</text>
</comment>
<comment type="interaction">
    <interactant intactId="EBI-6624656">
        <id>P24530</id>
    </interactant>
    <interactant intactId="EBI-715181">
        <id>P05305</id>
        <label>EDN1</label>
    </interactant>
    <organismsDiffer>false</organismsDiffer>
    <experiments>2</experiments>
</comment>
<comment type="subcellular location">
    <subcellularLocation>
        <location evidence="8">Cell membrane</location>
        <topology>Multi-pass membrane protein</topology>
    </subcellularLocation>
    <text evidence="8">internalized after activation by endothelins.</text>
</comment>
<comment type="alternative products">
    <event type="alternative splicing"/>
    <isoform>
        <id>P24530-1</id>
        <name>A</name>
        <sequence type="displayed"/>
    </isoform>
    <isoform>
        <id>P24530-2</id>
        <name>B</name>
        <sequence type="described" ref="VSP_001879"/>
    </isoform>
    <isoform>
        <id>P24530-3</id>
        <name>C</name>
        <name>Delta-3</name>
        <sequence type="described" ref="VSP_001878"/>
    </isoform>
</comment>
<comment type="tissue specificity">
    <text evidence="16">Expressed in placental stem villi vessels, but not in cultured placental villi smooth muscle cells.</text>
</comment>
<comment type="PTM">
    <text evidence="15">Palmitoylation of Cys-402 was confirmed by the palmitoylation of Cys-402 in a deletion mutant lacking both Cys-403 and Cys-405.</text>
</comment>
<comment type="disease" evidence="7 12">
    <disease id="DI-01139">
        <name>Waardenburg syndrome 4A</name>
        <acronym>WS4A</acronym>
        <description>A disorder characterized by the association of Waardenburg features (depigmentation and deafness) with the absence of enteric ganglia in the distal part of the intestine (Hirschsprung disease).</description>
        <dbReference type="MIM" id="277580"/>
    </disease>
    <text>The disease is caused by variants affecting the gene represented in this entry.</text>
</comment>
<comment type="disease" evidence="5 8 10 11 14">
    <disease id="DI-01747">
        <name>Hirschsprung disease 2</name>
        <acronym>HSCR2</acronym>
        <description>A disorder of neural crest development characterized by absence of enteric ganglia along a variable length of the intestine. It is the most common cause of congenital intestinal obstruction. Early symptoms range from complete acute neonatal obstruction, characterized by vomiting, abdominal distention and failure to pass stool, to chronic constipation in the older child.</description>
        <dbReference type="MIM" id="600155"/>
    </disease>
    <text>The disease is caused by variants affecting the gene represented in this entry.</text>
</comment>
<comment type="disease" evidence="6">
    <disease id="DI-00013">
        <name>ABCD syndrome</name>
        <acronym>ABCDS</acronym>
        <description>An autosomal recessive syndrome characterized by albinism, black lock at temporal occipital region, bilateral deafness, aganglionosis of the large intestine and total absence of neurocytes and nerve fibers in the small intestine.</description>
        <dbReference type="MIM" id="600501"/>
    </disease>
    <text>The disease is caused by variants affecting the gene represented in this entry.</text>
</comment>
<comment type="disease">
    <text evidence="8">Heterozygous mutations in EDNRB may be responsible for Waardenburg syndrome 2, an autosomal dominant disorder characterized by sensorineural deafness and pigmentary disturbances.</text>
</comment>
<comment type="similarity">
    <text evidence="3">Belongs to the G-protein coupled receptor 1 family. Endothelin receptor subfamily. EDNRB sub-subfamily.</text>
</comment>
<comment type="sequence caution" evidence="21">
    <conflict type="erroneous initiation">
        <sequence resource="EMBL-CDS" id="BAD92435"/>
    </conflict>
    <text>Extended N-terminus.</text>
</comment>
<proteinExistence type="evidence at protein level"/>
<sequence length="442" mass="49644">MQPPPSLCGRALVALVLACGLSRIWGEERGFPPDRATPLLQTAEIMTPPTKTLWPKGSNASLARSLAPAEVPKGDRTAGSPPRTISPPPCQGPIEIKETFKYINTVVSCLVFVLGIIGNSTLLRIIYKNKCMRNGPNILIASLALGDLLHIVIDIPINVYKLLAEDWPFGAEMCKLVPFIQKASVGITVLSLCALSIDRYRAVASWSRIKGIGVPKWTAVEIVLIWVVSVVLAVPEAIGFDIITMDYKGSYLRICLLHPVQKTAFMQFYKTAKDWWLFSFYFCLPLAITAFFYTLMTCEMLRKKSGMQIALNDHLKQRREVAKTVFCLVLVFALCWLPLHLSRILKLTLYNQNDPNRCELLSFLLVLDYIGINMASLNSCINPIALYLVSKRFKNCFKSCLCCWCQSFEEKQSLEEKQSCLKFKANDHGYDNFRSSNKYSSS</sequence>
<keyword id="KW-0002">3D-structure</keyword>
<keyword id="KW-0015">Albinism</keyword>
<keyword id="KW-0025">Alternative splicing</keyword>
<keyword id="KW-1003">Cell membrane</keyword>
<keyword id="KW-0209">Deafness</keyword>
<keyword id="KW-0225">Disease variant</keyword>
<keyword id="KW-1015">Disulfide bond</keyword>
<keyword id="KW-0297">G-protein coupled receptor</keyword>
<keyword id="KW-0325">Glycoprotein</keyword>
<keyword id="KW-0367">Hirschsprung disease</keyword>
<keyword id="KW-0449">Lipoprotein</keyword>
<keyword id="KW-0472">Membrane</keyword>
<keyword id="KW-0564">Palmitate</keyword>
<keyword id="KW-0597">Phosphoprotein</keyword>
<keyword id="KW-1267">Proteomics identification</keyword>
<keyword id="KW-0675">Receptor</keyword>
<keyword id="KW-1185">Reference proteome</keyword>
<keyword id="KW-0732">Signal</keyword>
<keyword id="KW-0807">Transducer</keyword>
<keyword id="KW-0812">Transmembrane</keyword>
<keyword id="KW-1133">Transmembrane helix</keyword>
<keyword id="KW-0897">Waardenburg syndrome</keyword>
<reference key="1">
    <citation type="journal article" date="1991" name="Biochem. Biophys. Res. Commun.">
        <title>Cloning and sequence analysis of a cDNA encoding human non-selective type of endothelin receptor.</title>
        <authorList>
            <person name="Nakamuta M."/>
            <person name="Takayanagi R."/>
            <person name="Sakai Y."/>
            <person name="Sakamoto S."/>
            <person name="Hagiwara H."/>
            <person name="Mizuno T."/>
            <person name="Saito Y."/>
            <person name="Hirose S."/>
            <person name="Yamamoto M."/>
            <person name="Nawata H."/>
        </authorList>
    </citation>
    <scope>NUCLEOTIDE SEQUENCE [MRNA] (ISOFORM A)</scope>
</reference>
<reference key="2">
    <citation type="journal article" date="1991" name="Biochem. Biophys. Res. Commun.">
        <title>Molecular cloning of a non-isopeptide-selective human endothelin receptor.</title>
        <authorList>
            <person name="Ogawa Y."/>
            <person name="Nakao K."/>
            <person name="Arai H."/>
            <person name="Nakagawa O."/>
            <person name="Hosoda K."/>
            <person name="Suga S."/>
            <person name="Nakanishi S."/>
            <person name="Imura H."/>
        </authorList>
    </citation>
    <scope>NUCLEOTIDE SEQUENCE [MRNA] (ISOFORM A)</scope>
</reference>
<reference key="3">
    <citation type="journal article" date="1991" name="Biochem. Biophys. Res. Commun.">
        <title>Cloning and functional expression of human cDNA for the ETB endothelin receptor.</title>
        <authorList>
            <person name="Sakamoto A."/>
            <person name="Yanagisawa M."/>
            <person name="Sakurai T."/>
            <person name="Takuwa Y."/>
            <person name="Yanagisawa H."/>
            <person name="Masaki T."/>
        </authorList>
    </citation>
    <scope>NUCLEOTIDE SEQUENCE [MRNA] (ISOFORM A)</scope>
</reference>
<reference key="4">
    <citation type="journal article" date="1992" name="J. Cardiovasc. Pharmacol.">
        <title>Molecular cloning of human endothelin (ET) receptors ETA and ETB.</title>
        <authorList>
            <person name="Haendler B."/>
            <person name="Hechler U."/>
            <person name="Schleuning W.-D."/>
        </authorList>
    </citation>
    <scope>NUCLEOTIDE SEQUENCE [MRNA] (ISOFORM A)</scope>
    <source>
        <tissue>Lung</tissue>
    </source>
</reference>
<reference key="5">
    <citation type="journal article" date="1992" name="Jpn. Circ. J.">
        <title>Molecular cloning of human endothelin receptors and their expression in vascular endothelial cells and smooth muscle cells.</title>
        <authorList>
            <person name="Arai H."/>
            <person name="Nakao K."/>
            <person name="Hosoda K."/>
            <person name="Ogawa Y."/>
            <person name="Nakagawa O."/>
            <person name="Komatsu Y."/>
            <person name="Imura H."/>
        </authorList>
    </citation>
    <scope>NUCLEOTIDE SEQUENCE [MRNA] (ISOFORM A)</scope>
</reference>
<reference key="6">
    <citation type="journal article" date="1993" name="J. Biol. Chem.">
        <title>The human endothelin-B receptor gene. Structural organization and chromosomal assignment.</title>
        <authorList>
            <person name="Arai H."/>
            <person name="Nakao K."/>
            <person name="Takaya K."/>
            <person name="Hosoda K."/>
            <person name="Ogawa Y."/>
            <person name="Nakanishi S."/>
            <person name="Imura H."/>
        </authorList>
    </citation>
    <scope>NUCLEOTIDE SEQUENCE [GENOMIC DNA]</scope>
</reference>
<reference key="7">
    <citation type="journal article" date="1993" name="J. Biol. Chem.">
        <title>Molecular characterization and regulation of the human endothelin receptors.</title>
        <authorList>
            <person name="Elshourbagy N.A."/>
            <person name="Korman D.R."/>
            <person name="Wu H.L."/>
            <person name="Sylvester D.R."/>
            <person name="Lee J.A."/>
            <person name="Nuthalaganti P."/>
            <person name="Bergsma D.J."/>
            <person name="Kumar C.S."/>
            <person name="Nambi P."/>
        </authorList>
    </citation>
    <scope>NUCLEOTIDE SEQUENCE [MRNA] (ISOFORM A)</scope>
</reference>
<reference key="8">
    <citation type="journal article" date="1995" name="Mol. Pharmacol.">
        <title>Cloning and expression of an endothelin receptor subtype B from human prostate that mediates contraction.</title>
        <authorList>
            <person name="Webb M.L."/>
            <person name="Chao C.-C."/>
            <person name="Rizzo M."/>
            <person name="Shapiro R.A."/>
            <person name="Neubauer M."/>
            <person name="Liu E.C.K."/>
            <person name="Aversa C.R."/>
            <person name="Brittain R.J."/>
            <person name="Treiger B."/>
        </authorList>
    </citation>
    <scope>NUCLEOTIDE SEQUENCE [MRNA] (ISOFORM A)</scope>
    <scope>FUNCTION</scope>
    <source>
        <tissue>Prostate</tissue>
    </source>
</reference>
<reference key="9">
    <citation type="journal article" date="1996" name="J. Biol. Chem.">
        <title>Molecular characterization of a novel human endothelin receptor splice variant.</title>
        <authorList>
            <person name="Elshourbagy N.A."/>
            <person name="Adamou J.E."/>
            <person name="Gagnon A.W."/>
            <person name="Wu H.L."/>
            <person name="Pullen M."/>
            <person name="Nambi P."/>
        </authorList>
    </citation>
    <scope>NUCLEOTIDE SEQUENCE [MRNA] (ISOFORM B)</scope>
    <source>
        <tissue>Placenta</tissue>
    </source>
</reference>
<reference key="10">
    <citation type="journal article" date="1999" name="Gene">
        <title>Novel endothelin B receptor transcripts with the potential of generating a new receptor.</title>
        <authorList>
            <person name="Tsutsumi M."/>
            <person name="Liang G."/>
            <person name="Jones P.A."/>
        </authorList>
    </citation>
    <scope>NUCLEOTIDE SEQUENCE [MRNA] (ISOFORM C)</scope>
</reference>
<reference key="11">
    <citation type="submission" date="2003-04" db="EMBL/GenBank/DDBJ databases">
        <title>cDNA clones of human proteins involved in signal transduction sequenced by the Guthrie cDNA resource center (www.cdna.org).</title>
        <authorList>
            <person name="Warren C.N."/>
            <person name="Aronstam R.S."/>
            <person name="Sharma S.V."/>
        </authorList>
    </citation>
    <scope>NUCLEOTIDE SEQUENCE [LARGE SCALE MRNA] (ISOFORM A)</scope>
    <source>
        <tissue>Placenta</tissue>
    </source>
</reference>
<reference key="12">
    <citation type="submission" date="2005-03" db="EMBL/GenBank/DDBJ databases">
        <authorList>
            <person name="Totoki Y."/>
            <person name="Toyoda A."/>
            <person name="Takeda T."/>
            <person name="Sakaki Y."/>
            <person name="Tanaka A."/>
            <person name="Yokoyama S."/>
            <person name="Ohara O."/>
            <person name="Nagase T."/>
            <person name="Kikuno R.F."/>
        </authorList>
    </citation>
    <scope>NUCLEOTIDE SEQUENCE [LARGE SCALE MRNA] (ISOFORM A)</scope>
    <source>
        <tissue>Brain</tissue>
    </source>
</reference>
<reference key="13">
    <citation type="journal article" date="2004" name="Nat. Genet.">
        <title>Complete sequencing and characterization of 21,243 full-length human cDNAs.</title>
        <authorList>
            <person name="Ota T."/>
            <person name="Suzuki Y."/>
            <person name="Nishikawa T."/>
            <person name="Otsuki T."/>
            <person name="Sugiyama T."/>
            <person name="Irie R."/>
            <person name="Wakamatsu A."/>
            <person name="Hayashi K."/>
            <person name="Sato H."/>
            <person name="Nagai K."/>
            <person name="Kimura K."/>
            <person name="Makita H."/>
            <person name="Sekine M."/>
            <person name="Obayashi M."/>
            <person name="Nishi T."/>
            <person name="Shibahara T."/>
            <person name="Tanaka T."/>
            <person name="Ishii S."/>
            <person name="Yamamoto J."/>
            <person name="Saito K."/>
            <person name="Kawai Y."/>
            <person name="Isono Y."/>
            <person name="Nakamura Y."/>
            <person name="Nagahari K."/>
            <person name="Murakami K."/>
            <person name="Yasuda T."/>
            <person name="Iwayanagi T."/>
            <person name="Wagatsuma M."/>
            <person name="Shiratori A."/>
            <person name="Sudo H."/>
            <person name="Hosoiri T."/>
            <person name="Kaku Y."/>
            <person name="Kodaira H."/>
            <person name="Kondo H."/>
            <person name="Sugawara M."/>
            <person name="Takahashi M."/>
            <person name="Kanda K."/>
            <person name="Yokoi T."/>
            <person name="Furuya T."/>
            <person name="Kikkawa E."/>
            <person name="Omura Y."/>
            <person name="Abe K."/>
            <person name="Kamihara K."/>
            <person name="Katsuta N."/>
            <person name="Sato K."/>
            <person name="Tanikawa M."/>
            <person name="Yamazaki M."/>
            <person name="Ninomiya K."/>
            <person name="Ishibashi T."/>
            <person name="Yamashita H."/>
            <person name="Murakawa K."/>
            <person name="Fujimori K."/>
            <person name="Tanai H."/>
            <person name="Kimata M."/>
            <person name="Watanabe M."/>
            <person name="Hiraoka S."/>
            <person name="Chiba Y."/>
            <person name="Ishida S."/>
            <person name="Ono Y."/>
            <person name="Takiguchi S."/>
            <person name="Watanabe S."/>
            <person name="Yosida M."/>
            <person name="Hotuta T."/>
            <person name="Kusano J."/>
            <person name="Kanehori K."/>
            <person name="Takahashi-Fujii A."/>
            <person name="Hara H."/>
            <person name="Tanase T.-O."/>
            <person name="Nomura Y."/>
            <person name="Togiya S."/>
            <person name="Komai F."/>
            <person name="Hara R."/>
            <person name="Takeuchi K."/>
            <person name="Arita M."/>
            <person name="Imose N."/>
            <person name="Musashino K."/>
            <person name="Yuuki H."/>
            <person name="Oshima A."/>
            <person name="Sasaki N."/>
            <person name="Aotsuka S."/>
            <person name="Yoshikawa Y."/>
            <person name="Matsunawa H."/>
            <person name="Ichihara T."/>
            <person name="Shiohata N."/>
            <person name="Sano S."/>
            <person name="Moriya S."/>
            <person name="Momiyama H."/>
            <person name="Satoh N."/>
            <person name="Takami S."/>
            <person name="Terashima Y."/>
            <person name="Suzuki O."/>
            <person name="Nakagawa S."/>
            <person name="Senoh A."/>
            <person name="Mizoguchi H."/>
            <person name="Goto Y."/>
            <person name="Shimizu F."/>
            <person name="Wakebe H."/>
            <person name="Hishigaki H."/>
            <person name="Watanabe T."/>
            <person name="Sugiyama A."/>
            <person name="Takemoto M."/>
            <person name="Kawakami B."/>
            <person name="Yamazaki M."/>
            <person name="Watanabe K."/>
            <person name="Kumagai A."/>
            <person name="Itakura S."/>
            <person name="Fukuzumi Y."/>
            <person name="Fujimori Y."/>
            <person name="Komiyama M."/>
            <person name="Tashiro H."/>
            <person name="Tanigami A."/>
            <person name="Fujiwara T."/>
            <person name="Ono T."/>
            <person name="Yamada K."/>
            <person name="Fujii Y."/>
            <person name="Ozaki K."/>
            <person name="Hirao M."/>
            <person name="Ohmori Y."/>
            <person name="Kawabata A."/>
            <person name="Hikiji T."/>
            <person name="Kobatake N."/>
            <person name="Inagaki H."/>
            <person name="Ikema Y."/>
            <person name="Okamoto S."/>
            <person name="Okitani R."/>
            <person name="Kawakami T."/>
            <person name="Noguchi S."/>
            <person name="Itoh T."/>
            <person name="Shigeta K."/>
            <person name="Senba T."/>
            <person name="Matsumura K."/>
            <person name="Nakajima Y."/>
            <person name="Mizuno T."/>
            <person name="Morinaga M."/>
            <person name="Sasaki M."/>
            <person name="Togashi T."/>
            <person name="Oyama M."/>
            <person name="Hata H."/>
            <person name="Watanabe M."/>
            <person name="Komatsu T."/>
            <person name="Mizushima-Sugano J."/>
            <person name="Satoh T."/>
            <person name="Shirai Y."/>
            <person name="Takahashi Y."/>
            <person name="Nakagawa K."/>
            <person name="Okumura K."/>
            <person name="Nagase T."/>
            <person name="Nomura N."/>
            <person name="Kikuchi H."/>
            <person name="Masuho Y."/>
            <person name="Yamashita R."/>
            <person name="Nakai K."/>
            <person name="Yada T."/>
            <person name="Nakamura Y."/>
            <person name="Ohara O."/>
            <person name="Isogai T."/>
            <person name="Sugano S."/>
        </authorList>
    </citation>
    <scope>NUCLEOTIDE SEQUENCE [LARGE SCALE MRNA]</scope>
    <source>
        <tissue>Lung</tissue>
    </source>
</reference>
<reference key="14">
    <citation type="submission" date="2004-02" db="EMBL/GenBank/DDBJ databases">
        <authorList>
            <consortium name="NIEHS SNPs program"/>
        </authorList>
    </citation>
    <scope>NUCLEOTIDE SEQUENCE [GENOMIC DNA]</scope>
    <scope>VARIANTS THR-5 AND ASN-305</scope>
</reference>
<reference key="15">
    <citation type="journal article" date="2004" name="Nature">
        <title>The DNA sequence and analysis of human chromosome 13.</title>
        <authorList>
            <person name="Dunham A."/>
            <person name="Matthews L.H."/>
            <person name="Burton J."/>
            <person name="Ashurst J.L."/>
            <person name="Howe K.L."/>
            <person name="Ashcroft K.J."/>
            <person name="Beare D.M."/>
            <person name="Burford D.C."/>
            <person name="Hunt S.E."/>
            <person name="Griffiths-Jones S."/>
            <person name="Jones M.C."/>
            <person name="Keenan S.J."/>
            <person name="Oliver K."/>
            <person name="Scott C.E."/>
            <person name="Ainscough R."/>
            <person name="Almeida J.P."/>
            <person name="Ambrose K.D."/>
            <person name="Andrews D.T."/>
            <person name="Ashwell R.I.S."/>
            <person name="Babbage A.K."/>
            <person name="Bagguley C.L."/>
            <person name="Bailey J."/>
            <person name="Bannerjee R."/>
            <person name="Barlow K.F."/>
            <person name="Bates K."/>
            <person name="Beasley H."/>
            <person name="Bird C.P."/>
            <person name="Bray-Allen S."/>
            <person name="Brown A.J."/>
            <person name="Brown J.Y."/>
            <person name="Burrill W."/>
            <person name="Carder C."/>
            <person name="Carter N.P."/>
            <person name="Chapman J.C."/>
            <person name="Clamp M.E."/>
            <person name="Clark S.Y."/>
            <person name="Clarke G."/>
            <person name="Clee C.M."/>
            <person name="Clegg S.C."/>
            <person name="Cobley V."/>
            <person name="Collins J.E."/>
            <person name="Corby N."/>
            <person name="Coville G.J."/>
            <person name="Deloukas P."/>
            <person name="Dhami P."/>
            <person name="Dunham I."/>
            <person name="Dunn M."/>
            <person name="Earthrowl M.E."/>
            <person name="Ellington A.G."/>
            <person name="Faulkner L."/>
            <person name="Frankish A.G."/>
            <person name="Frankland J."/>
            <person name="French L."/>
            <person name="Garner P."/>
            <person name="Garnett J."/>
            <person name="Gilbert J.G.R."/>
            <person name="Gilson C.J."/>
            <person name="Ghori J."/>
            <person name="Grafham D.V."/>
            <person name="Gribble S.M."/>
            <person name="Griffiths C."/>
            <person name="Hall R.E."/>
            <person name="Hammond S."/>
            <person name="Harley J.L."/>
            <person name="Hart E.A."/>
            <person name="Heath P.D."/>
            <person name="Howden P.J."/>
            <person name="Huckle E.J."/>
            <person name="Hunt P.J."/>
            <person name="Hunt A.R."/>
            <person name="Johnson C."/>
            <person name="Johnson D."/>
            <person name="Kay M."/>
            <person name="Kimberley A.M."/>
            <person name="King A."/>
            <person name="Laird G.K."/>
            <person name="Langford C.J."/>
            <person name="Lawlor S."/>
            <person name="Leongamornlert D.A."/>
            <person name="Lloyd D.M."/>
            <person name="Lloyd C."/>
            <person name="Loveland J.E."/>
            <person name="Lovell J."/>
            <person name="Martin S."/>
            <person name="Mashreghi-Mohammadi M."/>
            <person name="McLaren S.J."/>
            <person name="McMurray A."/>
            <person name="Milne S."/>
            <person name="Moore M.J.F."/>
            <person name="Nickerson T."/>
            <person name="Palmer S.A."/>
            <person name="Pearce A.V."/>
            <person name="Peck A.I."/>
            <person name="Pelan S."/>
            <person name="Phillimore B."/>
            <person name="Porter K.M."/>
            <person name="Rice C.M."/>
            <person name="Searle S."/>
            <person name="Sehra H.K."/>
            <person name="Shownkeen R."/>
            <person name="Skuce C.D."/>
            <person name="Smith M."/>
            <person name="Steward C.A."/>
            <person name="Sycamore N."/>
            <person name="Tester J."/>
            <person name="Thomas D.W."/>
            <person name="Tracey A."/>
            <person name="Tromans A."/>
            <person name="Tubby B."/>
            <person name="Wall M."/>
            <person name="Wallis J.M."/>
            <person name="West A.P."/>
            <person name="Whitehead S.L."/>
            <person name="Willey D.L."/>
            <person name="Wilming L."/>
            <person name="Wray P.W."/>
            <person name="Wright M.W."/>
            <person name="Young L."/>
            <person name="Coulson A."/>
            <person name="Durbin R.M."/>
            <person name="Hubbard T."/>
            <person name="Sulston J.E."/>
            <person name="Beck S."/>
            <person name="Bentley D.R."/>
            <person name="Rogers J."/>
            <person name="Ross M.T."/>
        </authorList>
    </citation>
    <scope>NUCLEOTIDE SEQUENCE [LARGE SCALE GENOMIC DNA]</scope>
</reference>
<reference key="16">
    <citation type="submission" date="2005-07" db="EMBL/GenBank/DDBJ databases">
        <authorList>
            <person name="Mural R.J."/>
            <person name="Istrail S."/>
            <person name="Sutton G.G."/>
            <person name="Florea L."/>
            <person name="Halpern A.L."/>
            <person name="Mobarry C.M."/>
            <person name="Lippert R."/>
            <person name="Walenz B."/>
            <person name="Shatkay H."/>
            <person name="Dew I."/>
            <person name="Miller J.R."/>
            <person name="Flanigan M.J."/>
            <person name="Edwards N.J."/>
            <person name="Bolanos R."/>
            <person name="Fasulo D."/>
            <person name="Halldorsson B.V."/>
            <person name="Hannenhalli S."/>
            <person name="Turner R."/>
            <person name="Yooseph S."/>
            <person name="Lu F."/>
            <person name="Nusskern D.R."/>
            <person name="Shue B.C."/>
            <person name="Zheng X.H."/>
            <person name="Zhong F."/>
            <person name="Delcher A.L."/>
            <person name="Huson D.H."/>
            <person name="Kravitz S.A."/>
            <person name="Mouchard L."/>
            <person name="Reinert K."/>
            <person name="Remington K.A."/>
            <person name="Clark A.G."/>
            <person name="Waterman M.S."/>
            <person name="Eichler E.E."/>
            <person name="Adams M.D."/>
            <person name="Hunkapiller M.W."/>
            <person name="Myers E.W."/>
            <person name="Venter J.C."/>
        </authorList>
    </citation>
    <scope>NUCLEOTIDE SEQUENCE [LARGE SCALE GENOMIC DNA]</scope>
</reference>
<reference key="17">
    <citation type="journal article" date="2004" name="Genome Res.">
        <title>The status, quality, and expansion of the NIH full-length cDNA project: the Mammalian Gene Collection (MGC).</title>
        <authorList>
            <consortium name="The MGC Project Team"/>
        </authorList>
    </citation>
    <scope>NUCLEOTIDE SEQUENCE [LARGE SCALE MRNA] (ISOFORM A)</scope>
    <source>
        <tissue>Skin</tissue>
    </source>
</reference>
<reference key="18">
    <citation type="journal article" date="2003" name="Mol. Cell. Probes">
        <title>Significance of novel endothelin-B receptor gene polymorphisms in Hirschsprung's disease: predominance of a novel variant (561C/T) in patients with co-existing Down's syndrome.</title>
        <authorList>
            <person name="Zaahl M.G."/>
            <person name="du Plessis L."/>
            <person name="Warnich L."/>
            <person name="Kotze M.J."/>
            <person name="Moore S.W."/>
        </authorList>
    </citation>
    <scope>NUCLEOTIDE SEQUENCE [GENOMIC DNA] OF 1-102; 172-196 AND 200-317</scope>
</reference>
<reference key="19">
    <citation type="journal article" date="1997" name="J. Clin. Endocrinol. Metab.">
        <title>Endothelin-1 and ETA receptor expression in vascular smooth muscle cells from human placenta: a new ETA receptor messenger ribonucleic acid is generated by alternative splicing of exon 3.</title>
        <authorList>
            <person name="Bourgeois C."/>
            <person name="Robert B."/>
            <person name="Rebourcet R."/>
            <person name="Mondon F."/>
            <person name="Mignot T.-M."/>
            <person name="Duc-Goiran P."/>
            <person name="Ferre F."/>
        </authorList>
    </citation>
    <scope>TISSUE SPECIFICITY</scope>
</reference>
<reference key="20">
    <citation type="journal article" date="1997" name="J. Biol. Chem.">
        <title>Palmitoylation of human endothelinB. Its critical role in G protein coupling and a differential requirement for the cytoplasmic tail by G protein subtypes.</title>
        <authorList>
            <person name="Okamoto Y."/>
            <person name="Ninomiya H."/>
            <person name="Tanioka M."/>
            <person name="Sakamoto A."/>
            <person name="Miwa S."/>
            <person name="Masaki T."/>
        </authorList>
    </citation>
    <scope>PALMITOYLATION AT CYS-402; CYS-403 AND CYS-405</scope>
    <scope>MUTAGENESIS OF CYS-402; CYS-403 AND CYS-405</scope>
</reference>
<reference key="21">
    <citation type="journal article" date="1997" name="Eur. J. Hum. Genet.">
        <title>Mutations in Hirschsprung disease: when does a mutation contribute to the phenotype.</title>
        <authorList>
            <person name="Hofstra R.M.W."/>
            <person name="Osinga J."/>
            <person name="Buys C.H.C.M."/>
        </authorList>
    </citation>
    <scope>REVIEW ON VARIANTS</scope>
</reference>
<reference key="22">
    <citation type="journal article" date="1994" name="Cell">
        <title>A missense mutation of the endothelin-B receptor gene in multigenic Hirschsprung's disease.</title>
        <authorList>
            <person name="Puffenberger E.G."/>
            <person name="Hosoda K."/>
            <person name="Washington S.S."/>
            <person name="Nakao K."/>
            <person name="Dewit D."/>
            <person name="Yanagisawa M."/>
            <person name="Chakravarti A."/>
        </authorList>
    </citation>
    <scope>VARIANT HSCR2 CYS-276</scope>
</reference>
<reference key="23">
    <citation type="journal article" date="1995" name="Hum. Mol. Genet.">
        <title>Mutation of the endothelin-receptor B gene in Waardenburg-Hirschsprung disease.</title>
        <authorList>
            <person name="Attie T."/>
            <person name="Till M."/>
            <person name="Pelet A."/>
            <person name="Amiel J."/>
            <person name="Edery P."/>
            <person name="Boutrand L."/>
            <person name="Munnich A."/>
            <person name="Lyonnet S."/>
        </authorList>
    </citation>
    <scope>VARIANT WS4A GLY-183</scope>
</reference>
<reference key="24">
    <citation type="journal article" date="1996" name="Hum. Mol. Genet.">
        <title>Endothelin-B receptor mutations in patients with isolated Hirschsprung disease from a non-inbred population.</title>
        <authorList>
            <person name="Auricchio A."/>
            <person name="Casari G."/>
            <person name="Staiano A."/>
            <person name="Ballabio A."/>
        </authorList>
    </citation>
    <scope>VARIANT ASN-305</scope>
</reference>
<reference key="25">
    <citation type="journal article" date="1996" name="Hum. Mol. Genet.">
        <title>Heterozygous endothelin receptor B (EDNRB) mutations in isolated Hirschsprung disease.</title>
        <authorList>
            <person name="Amiel J."/>
            <person name="Attie T."/>
            <person name="Jan D."/>
            <person name="Pelet A."/>
            <person name="Edery P."/>
            <person name="Bidaud C."/>
            <person name="Lacombe D."/>
            <person name="Tam P."/>
            <person name="Simeoni J."/>
            <person name="Flori E."/>
            <person name="Nihoul-Fekete C."/>
            <person name="Munnich A."/>
            <person name="Lyonnet S."/>
        </authorList>
    </citation>
    <scope>VARIANTS HSCR2 TRP-319 AND LEU-383</scope>
    <scope>VARIANT SER-57</scope>
</reference>
<reference key="26">
    <citation type="journal article" date="1996" name="Nat. Genet.">
        <title>A homozygous mutation in the endothelin-3 gene associated with a combined Waardenburg type 2 and Hirschsprung phenotype (Shah-Waardenburg syndrome).</title>
        <authorList>
            <person name="Hofstra R.M.W."/>
            <person name="Tan-Sindhunata G."/>
            <person name="Wu Y."/>
            <person name="Kamsteeg E.-J."/>
            <person name="Stulp R.P."/>
            <person name="van Ravenswaaij-Arts C."/>
            <person name="Majoor-Krakauer D."/>
            <person name="Angrist M."/>
            <person name="Chakravarti A."/>
            <person name="Meijers C."/>
            <person name="Buys C.H.C.M."/>
        </authorList>
    </citation>
    <scope>VARIANT HSCR2 ILE-374</scope>
    <scope>VARIANT SER-57</scope>
</reference>
<reference key="27">
    <citation type="journal article" date="1998" name="Hum. Genet.">
        <title>Phenotypic variation in a family with mutations in two Hirschsprung-related genes (RET and endothelin receptor B).</title>
        <authorList>
            <person name="Svensson P.J."/>
            <person name="Anvret M."/>
            <person name="Molander M.L."/>
            <person name="Nordenskjold A."/>
        </authorList>
    </citation>
    <scope>VARIANT SER-57</scope>
</reference>
<reference key="28">
    <citation type="journal article" date="1999" name="J. Med. Genet.">
        <title>A consanguineous family with Hirschsprung disease, microcephaly, and mental retardation (Goldberg-Shprintzen syndrome).</title>
        <authorList>
            <person name="Brooks A.S."/>
            <person name="Breuning M.H."/>
            <person name="Osinga J."/>
            <person name="vd Smagt J.J."/>
            <person name="Catsman C.E."/>
            <person name="Buys C.H."/>
            <person name="Meijers C."/>
            <person name="Hofstra R.M."/>
        </authorList>
    </citation>
    <scope>VARIANT ASN-305</scope>
</reference>
<reference key="29">
    <citation type="journal article" date="2001" name="Mol. Med.">
        <title>Functional characterization of three mutations of the endothelin B receptor gene in patients with Hirschsprung's disease: evidence for selective loss of Gi coupling.</title>
        <authorList>
            <person name="Fuchs S."/>
            <person name="Amiel J."/>
            <person name="Claudel S."/>
            <person name="Lyonnet S."/>
            <person name="Corvol P."/>
            <person name="Pinet F."/>
        </authorList>
    </citation>
    <scope>CHARACTERIZATION OF VARIANTS HSCR2 TRP-319 AND LEU-383</scope>
    <scope>CHARACTERIZATION OF VARIANT SER-57</scope>
</reference>
<reference key="30">
    <citation type="journal article" date="2002" name="Am. J. Med. Genet.">
        <title>ABCD syndrome is caused by a homozygous mutation in the EDNRB gene.</title>
        <authorList>
            <person name="Verheij J.B."/>
            <person name="Kunze J."/>
            <person name="Osinga J."/>
            <person name="van Essen A.J."/>
            <person name="Hofstra R.M."/>
        </authorList>
    </citation>
    <scope>INVOLVEMENT IN ABCD SYNDROME</scope>
</reference>
<reference key="31">
    <citation type="journal article" date="2002" name="Hum. Genet.">
        <title>SOX10 mutations in chronic intestinal pseudo-obstruction suggest a complex physiopathological mechanism.</title>
        <authorList>
            <person name="Pingault V."/>
            <person name="Girard M."/>
            <person name="Bondurand N."/>
            <person name="Dorkins H."/>
            <person name="Van Maldergem L."/>
            <person name="Mowat D."/>
            <person name="Shimotake T."/>
            <person name="Verma I."/>
            <person name="Baumann C."/>
            <person name="Goossens M."/>
        </authorList>
    </citation>
    <scope>VARIANT WS4A LEU-292</scope>
</reference>
<reference key="32">
    <citation type="journal article" date="2017" name="Hum. Mutat.">
        <title>EDNRB mutations cause Waardenburg syndrome type II in the heterozygous state.</title>
        <authorList>
            <person name="Issa S."/>
            <person name="Bondurand N."/>
            <person name="Faubert E."/>
            <person name="Poisson S."/>
            <person name="Lecerf L."/>
            <person name="Nitschke P."/>
            <person name="Deggouj N."/>
            <person name="Loundon N."/>
            <person name="Jonard L."/>
            <person name="David A."/>
            <person name="Sznajer Y."/>
            <person name="Blanchet P."/>
            <person name="Marlin S."/>
            <person name="Pingault V."/>
        </authorList>
    </citation>
    <scope>VARIANTS PHE-17; PRO-17; TYR-137; ARG-156 AND 226-TRP--SER-442 DEL</scope>
    <scope>INVOLVEMENT IN WAARDENBURG SYNDROME 2</scope>
    <scope>SUBCELLULAR LOCATION</scope>
    <scope>CHARACTERIZATION OF VARIANTS PHE-17; PRO-17; TYR-137; ARG-156 AND 226-TRP--SER-442 DEL</scope>
    <scope>CHARACTERIZATION OF VARIANTS HSCR2 ILE-374 AND LEU-383</scope>
</reference>
<organism>
    <name type="scientific">Homo sapiens</name>
    <name type="common">Human</name>
    <dbReference type="NCBI Taxonomy" id="9606"/>
    <lineage>
        <taxon>Eukaryota</taxon>
        <taxon>Metazoa</taxon>
        <taxon>Chordata</taxon>
        <taxon>Craniata</taxon>
        <taxon>Vertebrata</taxon>
        <taxon>Euteleostomi</taxon>
        <taxon>Mammalia</taxon>
        <taxon>Eutheria</taxon>
        <taxon>Euarchontoglires</taxon>
        <taxon>Primates</taxon>
        <taxon>Haplorrhini</taxon>
        <taxon>Catarrhini</taxon>
        <taxon>Hominidae</taxon>
        <taxon>Homo</taxon>
    </lineage>
</organism>
<name>EDNRB_HUMAN</name>
<evidence type="ECO:0000250" key="1">
    <source>
        <dbReference type="UniProtKB" id="P28088"/>
    </source>
</evidence>
<evidence type="ECO:0000255" key="2"/>
<evidence type="ECO:0000255" key="3">
    <source>
        <dbReference type="PROSITE-ProRule" id="PRU00521"/>
    </source>
</evidence>
<evidence type="ECO:0000256" key="4">
    <source>
        <dbReference type="SAM" id="MobiDB-lite"/>
    </source>
</evidence>
<evidence type="ECO:0000269" key="5">
    <source>
    </source>
</evidence>
<evidence type="ECO:0000269" key="6">
    <source>
    </source>
</evidence>
<evidence type="ECO:0000269" key="7">
    <source>
    </source>
</evidence>
<evidence type="ECO:0000269" key="8">
    <source>
    </source>
</evidence>
<evidence type="ECO:0000269" key="9">
    <source>
    </source>
</evidence>
<evidence type="ECO:0000269" key="10">
    <source>
    </source>
</evidence>
<evidence type="ECO:0000269" key="11">
    <source>
    </source>
</evidence>
<evidence type="ECO:0000269" key="12">
    <source>
    </source>
</evidence>
<evidence type="ECO:0000269" key="13">
    <source>
    </source>
</evidence>
<evidence type="ECO:0000269" key="14">
    <source>
    </source>
</evidence>
<evidence type="ECO:0000269" key="15">
    <source>
    </source>
</evidence>
<evidence type="ECO:0000269" key="16">
    <source>
    </source>
</evidence>
<evidence type="ECO:0000269" key="17">
    <source>
    </source>
</evidence>
<evidence type="ECO:0000269" key="18">
    <source ref="14"/>
</evidence>
<evidence type="ECO:0000303" key="19">
    <source>
    </source>
</evidence>
<evidence type="ECO:0000303" key="20">
    <source>
    </source>
</evidence>
<evidence type="ECO:0000305" key="21"/>
<evidence type="ECO:0000312" key="22">
    <source>
        <dbReference type="HGNC" id="HGNC:3180"/>
    </source>
</evidence>
<evidence type="ECO:0007829" key="23">
    <source>
        <dbReference type="PDB" id="5GLI"/>
    </source>
</evidence>
<evidence type="ECO:0007829" key="24">
    <source>
        <dbReference type="PDB" id="5X93"/>
    </source>
</evidence>
<evidence type="ECO:0007829" key="25">
    <source>
        <dbReference type="PDB" id="6IGK"/>
    </source>
</evidence>
<dbReference type="EMBL" id="M74921">
    <property type="protein sequence ID" value="AAA58465.1"/>
    <property type="molecule type" value="mRNA"/>
</dbReference>
<dbReference type="EMBL" id="D90402">
    <property type="protein sequence ID" value="BAA14398.1"/>
    <property type="molecule type" value="mRNA"/>
</dbReference>
<dbReference type="EMBL" id="S44866">
    <property type="protein sequence ID" value="AAB19411.1"/>
    <property type="molecule type" value="mRNA"/>
</dbReference>
<dbReference type="EMBL" id="S57283">
    <property type="protein sequence ID" value="AAB25531.1"/>
    <property type="molecule type" value="mRNA"/>
</dbReference>
<dbReference type="EMBL" id="D13168">
    <property type="protein sequence ID" value="BAA02445.1"/>
    <property type="molecule type" value="Genomic_DNA"/>
</dbReference>
<dbReference type="EMBL" id="L06623">
    <property type="protein sequence ID" value="AAA52342.1"/>
    <property type="molecule type" value="mRNA"/>
</dbReference>
<dbReference type="EMBL" id="X99250">
    <property type="protein sequence ID" value="CAA67623.1"/>
    <property type="molecule type" value="mRNA"/>
</dbReference>
<dbReference type="EMBL" id="AF114165">
    <property type="protein sequence ID" value="AAD24541.1"/>
    <property type="molecule type" value="mRNA"/>
</dbReference>
<dbReference type="EMBL" id="AY275463">
    <property type="protein sequence ID" value="AAP32295.1"/>
    <property type="molecule type" value="mRNA"/>
</dbReference>
<dbReference type="EMBL" id="AB209198">
    <property type="protein sequence ID" value="BAD92435.1"/>
    <property type="status" value="ALT_INIT"/>
    <property type="molecule type" value="mRNA"/>
</dbReference>
<dbReference type="EMBL" id="AK290699">
    <property type="protein sequence ID" value="BAF83388.1"/>
    <property type="molecule type" value="mRNA"/>
</dbReference>
<dbReference type="EMBL" id="AY547312">
    <property type="protein sequence ID" value="AAS38516.1"/>
    <property type="molecule type" value="Genomic_DNA"/>
</dbReference>
<dbReference type="EMBL" id="AL139002">
    <property type="status" value="NOT_ANNOTATED_CDS"/>
    <property type="molecule type" value="Genomic_DNA"/>
</dbReference>
<dbReference type="EMBL" id="CH471093">
    <property type="protein sequence ID" value="EAW80573.1"/>
    <property type="molecule type" value="Genomic_DNA"/>
</dbReference>
<dbReference type="EMBL" id="CH471093">
    <property type="protein sequence ID" value="EAW80575.1"/>
    <property type="molecule type" value="Genomic_DNA"/>
</dbReference>
<dbReference type="EMBL" id="BC014472">
    <property type="protein sequence ID" value="AAH14472.1"/>
    <property type="molecule type" value="mRNA"/>
</dbReference>
<dbReference type="EMBL" id="AJ458188">
    <property type="protein sequence ID" value="CAD30645.1"/>
    <property type="molecule type" value="Genomic_DNA"/>
</dbReference>
<dbReference type="EMBL" id="AJ458189">
    <property type="protein sequence ID" value="CAD30646.1"/>
    <property type="molecule type" value="Genomic_DNA"/>
</dbReference>
<dbReference type="EMBL" id="AJ458190">
    <property type="protein sequence ID" value="CAD30647.1"/>
    <property type="molecule type" value="Genomic_DNA"/>
</dbReference>
<dbReference type="EMBL" id="AJ458191">
    <property type="protein sequence ID" value="CAD30648.1"/>
    <property type="molecule type" value="Genomic_DNA"/>
</dbReference>
<dbReference type="CCDS" id="CCDS45059.1">
    <molecule id="P24530-2"/>
</dbReference>
<dbReference type="CCDS" id="CCDS55902.1">
    <molecule id="P24530-3"/>
</dbReference>
<dbReference type="CCDS" id="CCDS9461.1">
    <molecule id="P24530-1"/>
</dbReference>
<dbReference type="PIR" id="A46609">
    <property type="entry name" value="JQ1042"/>
</dbReference>
<dbReference type="RefSeq" id="NP_000106.1">
    <molecule id="P24530-1"/>
    <property type="nucleotide sequence ID" value="NM_000115.5"/>
</dbReference>
<dbReference type="RefSeq" id="NP_001116131.1">
    <molecule id="P24530-1"/>
    <property type="nucleotide sequence ID" value="NM_001122659.3"/>
</dbReference>
<dbReference type="RefSeq" id="NP_001188326.1">
    <molecule id="P24530-3"/>
    <property type="nucleotide sequence ID" value="NM_001201397.2"/>
</dbReference>
<dbReference type="RefSeq" id="NP_003982.1">
    <molecule id="P24530-2"/>
    <property type="nucleotide sequence ID" value="NM_003991.4"/>
</dbReference>
<dbReference type="PDB" id="5GLH">
    <property type="method" value="X-ray"/>
    <property type="resolution" value="2.80 A"/>
    <property type="chains" value="A=66-303, A=313-395"/>
</dbReference>
<dbReference type="PDB" id="5GLI">
    <property type="method" value="X-ray"/>
    <property type="resolution" value="2.50 A"/>
    <property type="chains" value="A=66-303, A=313-395"/>
</dbReference>
<dbReference type="PDB" id="5X93">
    <property type="method" value="X-ray"/>
    <property type="resolution" value="2.20 A"/>
    <property type="chains" value="A=66-303, A=311-407"/>
</dbReference>
<dbReference type="PDB" id="5XPR">
    <property type="method" value="X-ray"/>
    <property type="resolution" value="3.60 A"/>
    <property type="chains" value="A=66-303, A=311-407"/>
</dbReference>
<dbReference type="PDB" id="6IGK">
    <property type="method" value="X-ray"/>
    <property type="resolution" value="2.00 A"/>
    <property type="chains" value="A=66-407"/>
</dbReference>
<dbReference type="PDB" id="6IGL">
    <property type="method" value="X-ray"/>
    <property type="resolution" value="2.70 A"/>
    <property type="chains" value="A=66-407"/>
</dbReference>
<dbReference type="PDB" id="6LRY">
    <property type="method" value="X-ray"/>
    <property type="resolution" value="3.00 A"/>
    <property type="chains" value="A=66-407"/>
</dbReference>
<dbReference type="PDB" id="8HBD">
    <property type="method" value="EM"/>
    <property type="resolution" value="2.99 A"/>
    <property type="chains" value="R=27-424"/>
</dbReference>
<dbReference type="PDB" id="8HCX">
    <property type="method" value="EM"/>
    <property type="resolution" value="3.50 A"/>
    <property type="chains" value="C=27-424"/>
</dbReference>
<dbReference type="PDB" id="8IY5">
    <property type="method" value="EM"/>
    <property type="resolution" value="2.80 A"/>
    <property type="chains" value="R=27-442"/>
</dbReference>
<dbReference type="PDB" id="8IY6">
    <property type="method" value="EM"/>
    <property type="resolution" value="3.13 A"/>
    <property type="chains" value="R=27-442"/>
</dbReference>
<dbReference type="PDB" id="8XGR">
    <property type="method" value="EM"/>
    <property type="resolution" value="3.20 A"/>
    <property type="chains" value="R=27-442"/>
</dbReference>
<dbReference type="PDB" id="8XVE">
    <property type="method" value="EM"/>
    <property type="resolution" value="3.00 A"/>
    <property type="chains" value="R=67-406"/>
</dbReference>
<dbReference type="PDB" id="8XVH">
    <property type="method" value="EM"/>
    <property type="resolution" value="3.26 A"/>
    <property type="chains" value="R=67-406"/>
</dbReference>
<dbReference type="PDB" id="8XWP">
    <property type="method" value="EM"/>
    <property type="resolution" value="3.21 A"/>
    <property type="chains" value="R=66-407"/>
</dbReference>
<dbReference type="PDB" id="8XWQ">
    <property type="method" value="EM"/>
    <property type="resolution" value="4.60 A"/>
    <property type="chains" value="R=66-407"/>
</dbReference>
<dbReference type="PDB" id="8ZRT">
    <property type="method" value="EM"/>
    <property type="resolution" value="3.62 A"/>
    <property type="chains" value="R=66-407"/>
</dbReference>
<dbReference type="PDBsum" id="5GLH"/>
<dbReference type="PDBsum" id="5GLI"/>
<dbReference type="PDBsum" id="5X93"/>
<dbReference type="PDBsum" id="5XPR"/>
<dbReference type="PDBsum" id="6IGK"/>
<dbReference type="PDBsum" id="6IGL"/>
<dbReference type="PDBsum" id="6LRY"/>
<dbReference type="PDBsum" id="8HBD"/>
<dbReference type="PDBsum" id="8HCX"/>
<dbReference type="PDBsum" id="8IY5"/>
<dbReference type="PDBsum" id="8IY6"/>
<dbReference type="PDBsum" id="8XGR"/>
<dbReference type="PDBsum" id="8XVE"/>
<dbReference type="PDBsum" id="8XVH"/>
<dbReference type="PDBsum" id="8XWP"/>
<dbReference type="PDBsum" id="8XWQ"/>
<dbReference type="PDBsum" id="8ZRT"/>
<dbReference type="EMDB" id="EMD-34619"/>
<dbReference type="EMDB" id="EMD-35814"/>
<dbReference type="EMDB" id="EMD-35815"/>
<dbReference type="EMDB" id="EMD-38330"/>
<dbReference type="EMDB" id="EMD-38702"/>
<dbReference type="EMDB" id="EMD-38704"/>
<dbReference type="EMDB" id="EMD-38740"/>
<dbReference type="EMDB" id="EMD-38741"/>
<dbReference type="EMDB" id="EMD-60404"/>
<dbReference type="SMR" id="P24530"/>
<dbReference type="BioGRID" id="108232">
    <property type="interactions" value="35"/>
</dbReference>
<dbReference type="CORUM" id="P24530"/>
<dbReference type="FunCoup" id="P24530">
    <property type="interactions" value="1416"/>
</dbReference>
<dbReference type="IntAct" id="P24530">
    <property type="interactions" value="33"/>
</dbReference>
<dbReference type="MINT" id="P24530"/>
<dbReference type="STRING" id="9606.ENSP00000366416"/>
<dbReference type="BindingDB" id="P24530"/>
<dbReference type="ChEMBL" id="CHEMBL1785"/>
<dbReference type="DrugBank" id="DB06403">
    <property type="generic name" value="Ambrisentan"/>
</dbReference>
<dbReference type="DrugBank" id="DB15059">
    <property type="generic name" value="Aprocitentan"/>
</dbReference>
<dbReference type="DrugBank" id="DB00559">
    <property type="generic name" value="Bosentan"/>
</dbReference>
<dbReference type="DrugBank" id="DB17984">
    <property type="generic name" value="BQ-788"/>
</dbReference>
<dbReference type="DrugBank" id="DB06460">
    <property type="generic name" value="Enrasentan"/>
</dbReference>
<dbReference type="DrugBank" id="DB06138">
    <property type="generic name" value="IRL-1620"/>
</dbReference>
<dbReference type="DrugBank" id="DB08932">
    <property type="generic name" value="Macitentan"/>
</dbReference>
<dbReference type="DrugBank" id="DB06268">
    <property type="generic name" value="Sitaxentan"/>
</dbReference>
<dbReference type="DrugBank" id="DB06558">
    <property type="generic name" value="Tezosentan"/>
</dbReference>
<dbReference type="DrugCentral" id="P24530"/>
<dbReference type="GuidetoPHARMACOLOGY" id="220"/>
<dbReference type="GlyCosmos" id="P24530">
    <property type="glycosylation" value="1 site, No reported glycans"/>
</dbReference>
<dbReference type="GlyGen" id="P24530">
    <property type="glycosylation" value="1 site"/>
</dbReference>
<dbReference type="iPTMnet" id="P24530"/>
<dbReference type="PhosphoSitePlus" id="P24530"/>
<dbReference type="SwissPalm" id="P24530"/>
<dbReference type="BioMuta" id="EDNRB"/>
<dbReference type="DMDM" id="119622"/>
<dbReference type="jPOST" id="P24530"/>
<dbReference type="MassIVE" id="P24530"/>
<dbReference type="PaxDb" id="9606-ENSP00000366416"/>
<dbReference type="PeptideAtlas" id="P24530"/>
<dbReference type="ProteomicsDB" id="54211">
    <molecule id="P24530-1"/>
</dbReference>
<dbReference type="ProteomicsDB" id="54212">
    <molecule id="P24530-2"/>
</dbReference>
<dbReference type="ProteomicsDB" id="54213">
    <molecule id="P24530-3"/>
</dbReference>
<dbReference type="ABCD" id="P24530">
    <property type="antibodies" value="3 sequenced antibodies"/>
</dbReference>
<dbReference type="Antibodypedia" id="4509">
    <property type="antibodies" value="476 antibodies from 39 providers"/>
</dbReference>
<dbReference type="DNASU" id="1910"/>
<dbReference type="Ensembl" id="ENST00000377211.8">
    <molecule id="P24530-3"/>
    <property type="protein sequence ID" value="ENSP00000366416.4"/>
    <property type="gene ID" value="ENSG00000136160.17"/>
</dbReference>
<dbReference type="Ensembl" id="ENST00000475537.2">
    <molecule id="P24530-1"/>
    <property type="protein sequence ID" value="ENSP00000487082.2"/>
    <property type="gene ID" value="ENSG00000136160.17"/>
</dbReference>
<dbReference type="Ensembl" id="ENST00000626030.1">
    <molecule id="P24530-2"/>
    <property type="protein sequence ID" value="ENSP00000486202.1"/>
    <property type="gene ID" value="ENSG00000136160.17"/>
</dbReference>
<dbReference type="Ensembl" id="ENST00000646605.1">
    <molecule id="P24530-1"/>
    <property type="protein sequence ID" value="ENSP00000494278.1"/>
    <property type="gene ID" value="ENSG00000136160.17"/>
</dbReference>
<dbReference type="Ensembl" id="ENST00000646607.2">
    <molecule id="P24530-1"/>
    <property type="protein sequence ID" value="ENSP00000493527.1"/>
    <property type="gene ID" value="ENSG00000136160.17"/>
</dbReference>
<dbReference type="Ensembl" id="ENST00000646948.1">
    <molecule id="P24530-1"/>
    <property type="protein sequence ID" value="ENSP00000493895.1"/>
    <property type="gene ID" value="ENSG00000136160.17"/>
</dbReference>
<dbReference type="GeneID" id="1910"/>
<dbReference type="KEGG" id="hsa:1910"/>
<dbReference type="MANE-Select" id="ENST00000646607.2">
    <property type="protein sequence ID" value="ENSP00000493527.1"/>
    <property type="RefSeq nucleotide sequence ID" value="NM_001122659.3"/>
    <property type="RefSeq protein sequence ID" value="NP_001116131.1"/>
</dbReference>
<dbReference type="UCSC" id="uc001vko.3">
    <molecule id="P24530-1"/>
    <property type="organism name" value="human"/>
</dbReference>
<dbReference type="AGR" id="HGNC:3180"/>
<dbReference type="CTD" id="1910"/>
<dbReference type="DisGeNET" id="1910"/>
<dbReference type="GeneCards" id="EDNRB"/>
<dbReference type="HGNC" id="HGNC:3180">
    <property type="gene designation" value="EDNRB"/>
</dbReference>
<dbReference type="HPA" id="ENSG00000136160">
    <property type="expression patterns" value="Tissue enhanced (placenta)"/>
</dbReference>
<dbReference type="MalaCards" id="EDNRB"/>
<dbReference type="MIM" id="131244">
    <property type="type" value="gene"/>
</dbReference>
<dbReference type="MIM" id="142623">
    <property type="type" value="phenotype"/>
</dbReference>
<dbReference type="MIM" id="277580">
    <property type="type" value="phenotype"/>
</dbReference>
<dbReference type="MIM" id="600155">
    <property type="type" value="phenotype"/>
</dbReference>
<dbReference type="MIM" id="600501">
    <property type="type" value="phenotype"/>
</dbReference>
<dbReference type="neXtProt" id="NX_P24530"/>
<dbReference type="OpenTargets" id="ENSG00000136160"/>
<dbReference type="Orphanet" id="388">
    <property type="disease" value="Hirschsprung disease"/>
</dbReference>
<dbReference type="Orphanet" id="895">
    <property type="disease" value="Waardenburg syndrome type 2"/>
</dbReference>
<dbReference type="Orphanet" id="897">
    <property type="disease" value="Waardenburg-Shah syndrome"/>
</dbReference>
<dbReference type="PharmGKB" id="PA27618"/>
<dbReference type="VEuPathDB" id="HostDB:ENSG00000136160"/>
<dbReference type="eggNOG" id="KOG3656">
    <property type="taxonomic scope" value="Eukaryota"/>
</dbReference>
<dbReference type="GeneTree" id="ENSGT01120000271837"/>
<dbReference type="HOGENOM" id="CLU_009579_28_0_1"/>
<dbReference type="InParanoid" id="P24530"/>
<dbReference type="OMA" id="YDQSDPN"/>
<dbReference type="OrthoDB" id="10037617at2759"/>
<dbReference type="PAN-GO" id="P24530">
    <property type="GO annotations" value="5 GO annotations based on evolutionary models"/>
</dbReference>
<dbReference type="PhylomeDB" id="P24530"/>
<dbReference type="TreeFam" id="TF331292"/>
<dbReference type="PathwayCommons" id="P24530"/>
<dbReference type="Reactome" id="R-HSA-375276">
    <property type="pathway name" value="Peptide ligand-binding receptors"/>
</dbReference>
<dbReference type="Reactome" id="R-HSA-416476">
    <property type="pathway name" value="G alpha (q) signalling events"/>
</dbReference>
<dbReference type="Reactome" id="R-HSA-9856649">
    <property type="pathway name" value="Transcriptional and post-translational regulation of MITF-M expression and activity"/>
</dbReference>
<dbReference type="SignaLink" id="P24530"/>
<dbReference type="SIGNOR" id="P24530"/>
<dbReference type="BioGRID-ORCS" id="1910">
    <property type="hits" value="11 hits in 1158 CRISPR screens"/>
</dbReference>
<dbReference type="ChiTaRS" id="EDNRB">
    <property type="organism name" value="human"/>
</dbReference>
<dbReference type="GeneWiki" id="Endothelin_receptor_type_B"/>
<dbReference type="GenomeRNAi" id="1910"/>
<dbReference type="Pharos" id="P24530">
    <property type="development level" value="Tclin"/>
</dbReference>
<dbReference type="PRO" id="PR:P24530"/>
<dbReference type="Proteomes" id="UP000005640">
    <property type="component" value="Chromosome 13"/>
</dbReference>
<dbReference type="RNAct" id="P24530">
    <property type="molecule type" value="protein"/>
</dbReference>
<dbReference type="Bgee" id="ENSG00000136160">
    <property type="expression patterns" value="Expressed in parotid gland and 196 other cell types or tissues"/>
</dbReference>
<dbReference type="ExpressionAtlas" id="P24530">
    <property type="expression patterns" value="baseline and differential"/>
</dbReference>
<dbReference type="GO" id="GO:0031965">
    <property type="term" value="C:nuclear membrane"/>
    <property type="evidence" value="ECO:0007669"/>
    <property type="project" value="Ensembl"/>
</dbReference>
<dbReference type="GO" id="GO:0005886">
    <property type="term" value="C:plasma membrane"/>
    <property type="evidence" value="ECO:0000314"/>
    <property type="project" value="UniProtKB"/>
</dbReference>
<dbReference type="GO" id="GO:0004962">
    <property type="term" value="F:endothelin receptor activity"/>
    <property type="evidence" value="ECO:0000314"/>
    <property type="project" value="BHF-UCL"/>
</dbReference>
<dbReference type="GO" id="GO:0017046">
    <property type="term" value="F:peptide hormone binding"/>
    <property type="evidence" value="ECO:0000353"/>
    <property type="project" value="BHF-UCL"/>
</dbReference>
<dbReference type="GO" id="GO:0031702">
    <property type="term" value="F:type 1 angiotensin receptor binding"/>
    <property type="evidence" value="ECO:0007669"/>
    <property type="project" value="Ensembl"/>
</dbReference>
<dbReference type="GO" id="GO:0032341">
    <property type="term" value="P:aldosterone metabolic process"/>
    <property type="evidence" value="ECO:0007669"/>
    <property type="project" value="Ensembl"/>
</dbReference>
<dbReference type="GO" id="GO:0070588">
    <property type="term" value="P:calcium ion transmembrane transport"/>
    <property type="evidence" value="ECO:0007669"/>
    <property type="project" value="Ensembl"/>
</dbReference>
<dbReference type="GO" id="GO:0019722">
    <property type="term" value="P:calcium-mediated signaling"/>
    <property type="evidence" value="ECO:0000315"/>
    <property type="project" value="UniProtKB"/>
</dbReference>
<dbReference type="GO" id="GO:0060070">
    <property type="term" value="P:canonical Wnt signaling pathway"/>
    <property type="evidence" value="ECO:0007669"/>
    <property type="project" value="Ensembl"/>
</dbReference>
<dbReference type="GO" id="GO:0007166">
    <property type="term" value="P:cell surface receptor signaling pathway"/>
    <property type="evidence" value="ECO:0000304"/>
    <property type="project" value="ProtInc"/>
</dbReference>
<dbReference type="GO" id="GO:0071222">
    <property type="term" value="P:cellular response to lipopolysaccharide"/>
    <property type="evidence" value="ECO:0007669"/>
    <property type="project" value="Ensembl"/>
</dbReference>
<dbReference type="GO" id="GO:0019934">
    <property type="term" value="P:cGMP-mediated signaling"/>
    <property type="evidence" value="ECO:0007669"/>
    <property type="project" value="Ensembl"/>
</dbReference>
<dbReference type="GO" id="GO:0160093">
    <property type="term" value="P:chordate pharynx development"/>
    <property type="evidence" value="ECO:0007669"/>
    <property type="project" value="Ensembl"/>
</dbReference>
<dbReference type="GO" id="GO:0048066">
    <property type="term" value="P:developmental pigmentation"/>
    <property type="evidence" value="ECO:0000318"/>
    <property type="project" value="GO_Central"/>
</dbReference>
<dbReference type="GO" id="GO:0086100">
    <property type="term" value="P:endothelin receptor signaling pathway"/>
    <property type="evidence" value="ECO:0000314"/>
    <property type="project" value="BHF-UCL"/>
</dbReference>
<dbReference type="GO" id="GO:0048484">
    <property type="term" value="P:enteric nervous system development"/>
    <property type="evidence" value="ECO:0000250"/>
    <property type="project" value="BHF-UCL"/>
</dbReference>
<dbReference type="GO" id="GO:0035645">
    <property type="term" value="P:enteric smooth muscle cell differentiation"/>
    <property type="evidence" value="ECO:0000250"/>
    <property type="project" value="BHF-UCL"/>
</dbReference>
<dbReference type="GO" id="GO:0042045">
    <property type="term" value="P:epithelial fluid transport"/>
    <property type="evidence" value="ECO:0007669"/>
    <property type="project" value="Ensembl"/>
</dbReference>
<dbReference type="GO" id="GO:0061028">
    <property type="term" value="P:establishment of endothelial barrier"/>
    <property type="evidence" value="ECO:0007669"/>
    <property type="project" value="Ensembl"/>
</dbReference>
<dbReference type="GO" id="GO:0010467">
    <property type="term" value="P:gene expression"/>
    <property type="evidence" value="ECO:0007669"/>
    <property type="project" value="Ensembl"/>
</dbReference>
<dbReference type="GO" id="GO:0030202">
    <property type="term" value="P:heparin proteoglycan metabolic process"/>
    <property type="evidence" value="ECO:0007669"/>
    <property type="project" value="Ensembl"/>
</dbReference>
<dbReference type="GO" id="GO:0048246">
    <property type="term" value="P:macrophage chemotaxis"/>
    <property type="evidence" value="ECO:0000315"/>
    <property type="project" value="BHF-UCL"/>
</dbReference>
<dbReference type="GO" id="GO:0030318">
    <property type="term" value="P:melanocyte differentiation"/>
    <property type="evidence" value="ECO:0007669"/>
    <property type="project" value="Ensembl"/>
</dbReference>
<dbReference type="GO" id="GO:0007194">
    <property type="term" value="P:negative regulation of adenylate cyclase activity"/>
    <property type="evidence" value="ECO:0000304"/>
    <property type="project" value="ProtInc"/>
</dbReference>
<dbReference type="GO" id="GO:0043066">
    <property type="term" value="P:negative regulation of apoptotic process"/>
    <property type="evidence" value="ECO:0007669"/>
    <property type="project" value="Ensembl"/>
</dbReference>
<dbReference type="GO" id="GO:0014043">
    <property type="term" value="P:negative regulation of neuron maturation"/>
    <property type="evidence" value="ECO:0000250"/>
    <property type="project" value="BHF-UCL"/>
</dbReference>
<dbReference type="GO" id="GO:0051248">
    <property type="term" value="P:negative regulation of protein metabolic process"/>
    <property type="evidence" value="ECO:0000315"/>
    <property type="project" value="BHF-UCL"/>
</dbReference>
<dbReference type="GO" id="GO:0000122">
    <property type="term" value="P:negative regulation of transcription by RNA polymerase II"/>
    <property type="evidence" value="ECO:0000315"/>
    <property type="project" value="BHF-UCL"/>
</dbReference>
<dbReference type="GO" id="GO:0007399">
    <property type="term" value="P:nervous system development"/>
    <property type="evidence" value="ECO:0000304"/>
    <property type="project" value="ProtInc"/>
</dbReference>
<dbReference type="GO" id="GO:0001755">
    <property type="term" value="P:neural crest cell migration"/>
    <property type="evidence" value="ECO:0007669"/>
    <property type="project" value="Ensembl"/>
</dbReference>
<dbReference type="GO" id="GO:0097402">
    <property type="term" value="P:neuroblast migration"/>
    <property type="evidence" value="ECO:0007669"/>
    <property type="project" value="Ensembl"/>
</dbReference>
<dbReference type="GO" id="GO:0007422">
    <property type="term" value="P:peripheral nervous system development"/>
    <property type="evidence" value="ECO:0007669"/>
    <property type="project" value="Ensembl"/>
</dbReference>
<dbReference type="GO" id="GO:0007200">
    <property type="term" value="P:phospholipase C-activating G protein-coupled receptor signaling pathway"/>
    <property type="evidence" value="ECO:0000304"/>
    <property type="project" value="ProtInc"/>
</dbReference>
<dbReference type="GO" id="GO:0072112">
    <property type="term" value="P:podocyte differentiation"/>
    <property type="evidence" value="ECO:0007669"/>
    <property type="project" value="Ensembl"/>
</dbReference>
<dbReference type="GO" id="GO:0043123">
    <property type="term" value="P:positive regulation of canonical NF-kappaB signal transduction"/>
    <property type="evidence" value="ECO:0007669"/>
    <property type="project" value="Ensembl"/>
</dbReference>
<dbReference type="GO" id="GO:0008284">
    <property type="term" value="P:positive regulation of cell population proliferation"/>
    <property type="evidence" value="ECO:0007669"/>
    <property type="project" value="Ensembl"/>
</dbReference>
<dbReference type="GO" id="GO:0007204">
    <property type="term" value="P:positive regulation of cytosolic calcium ion concentration"/>
    <property type="evidence" value="ECO:0007669"/>
    <property type="project" value="Ensembl"/>
</dbReference>
<dbReference type="GO" id="GO:0060406">
    <property type="term" value="P:positive regulation of penile erection"/>
    <property type="evidence" value="ECO:0007669"/>
    <property type="project" value="Ensembl"/>
</dbReference>
<dbReference type="GO" id="GO:0035810">
    <property type="term" value="P:positive regulation of urine volume"/>
    <property type="evidence" value="ECO:0007669"/>
    <property type="project" value="Ensembl"/>
</dbReference>
<dbReference type="GO" id="GO:0007497">
    <property type="term" value="P:posterior midgut development"/>
    <property type="evidence" value="ECO:0007669"/>
    <property type="project" value="Ensembl"/>
</dbReference>
<dbReference type="GO" id="GO:0071806">
    <property type="term" value="P:protein transmembrane transport"/>
    <property type="evidence" value="ECO:0007669"/>
    <property type="project" value="Ensembl"/>
</dbReference>
<dbReference type="GO" id="GO:0050678">
    <property type="term" value="P:regulation of epithelial cell proliferation"/>
    <property type="evidence" value="ECO:0007669"/>
    <property type="project" value="Ensembl"/>
</dbReference>
<dbReference type="GO" id="GO:0031620">
    <property type="term" value="P:regulation of fever generation"/>
    <property type="evidence" value="ECO:0007669"/>
    <property type="project" value="Ensembl"/>
</dbReference>
<dbReference type="GO" id="GO:0002027">
    <property type="term" value="P:regulation of heart rate"/>
    <property type="evidence" value="ECO:0007669"/>
    <property type="project" value="Ensembl"/>
</dbReference>
<dbReference type="GO" id="GO:0006885">
    <property type="term" value="P:regulation of pH"/>
    <property type="evidence" value="ECO:0007669"/>
    <property type="project" value="Ensembl"/>
</dbReference>
<dbReference type="GO" id="GO:0097018">
    <property type="term" value="P:renal albumin absorption"/>
    <property type="evidence" value="ECO:0007669"/>
    <property type="project" value="Ensembl"/>
</dbReference>
<dbReference type="GO" id="GO:0035812">
    <property type="term" value="P:renal sodium excretion"/>
    <property type="evidence" value="ECO:0007669"/>
    <property type="project" value="Ensembl"/>
</dbReference>
<dbReference type="GO" id="GO:0070294">
    <property type="term" value="P:renal sodium ion absorption"/>
    <property type="evidence" value="ECO:0007669"/>
    <property type="project" value="Ensembl"/>
</dbReference>
<dbReference type="GO" id="GO:0002001">
    <property type="term" value="P:renin secretion into blood stream"/>
    <property type="evidence" value="ECO:0007669"/>
    <property type="project" value="Ensembl"/>
</dbReference>
<dbReference type="GO" id="GO:1990839">
    <property type="term" value="P:response to endothelin"/>
    <property type="evidence" value="ECO:0007669"/>
    <property type="project" value="Ensembl"/>
</dbReference>
<dbReference type="GO" id="GO:0048265">
    <property type="term" value="P:response to pain"/>
    <property type="evidence" value="ECO:0007669"/>
    <property type="project" value="Ensembl"/>
</dbReference>
<dbReference type="GO" id="GO:1904383">
    <property type="term" value="P:response to sodium phosphate"/>
    <property type="evidence" value="ECO:0007669"/>
    <property type="project" value="Ensembl"/>
</dbReference>
<dbReference type="GO" id="GO:0042310">
    <property type="term" value="P:vasoconstriction"/>
    <property type="evidence" value="ECO:0000315"/>
    <property type="project" value="BHF-UCL"/>
</dbReference>
<dbReference type="GO" id="GO:0042311">
    <property type="term" value="P:vasodilation"/>
    <property type="evidence" value="ECO:0007669"/>
    <property type="project" value="Ensembl"/>
</dbReference>
<dbReference type="GO" id="GO:0014826">
    <property type="term" value="P:vein smooth muscle contraction"/>
    <property type="evidence" value="ECO:0000315"/>
    <property type="project" value="BHF-UCL"/>
</dbReference>
<dbReference type="CDD" id="cd15976">
    <property type="entry name" value="7tmA_ET-BR"/>
    <property type="match status" value="1"/>
</dbReference>
<dbReference type="FunFam" id="1.20.1070.10:FF:000076">
    <property type="entry name" value="Endothelin receptor type B"/>
    <property type="match status" value="1"/>
</dbReference>
<dbReference type="Gene3D" id="1.20.1070.10">
    <property type="entry name" value="Rhodopsin 7-helix transmembrane proteins"/>
    <property type="match status" value="1"/>
</dbReference>
<dbReference type="InterPro" id="IPR000499">
    <property type="entry name" value="Endthln_rcpt"/>
</dbReference>
<dbReference type="InterPro" id="IPR001112">
    <property type="entry name" value="ETB_rcpt"/>
</dbReference>
<dbReference type="InterPro" id="IPR051193">
    <property type="entry name" value="GPCR_endothelin_rcpt"/>
</dbReference>
<dbReference type="InterPro" id="IPR000276">
    <property type="entry name" value="GPCR_Rhodpsn"/>
</dbReference>
<dbReference type="InterPro" id="IPR017452">
    <property type="entry name" value="GPCR_Rhodpsn_7TM"/>
</dbReference>
<dbReference type="PANTHER" id="PTHR46099:SF3">
    <property type="entry name" value="ENDOTHELIN RECEPTOR TYPE B"/>
    <property type="match status" value="1"/>
</dbReference>
<dbReference type="PANTHER" id="PTHR46099">
    <property type="entry name" value="G_PROTEIN_RECEP_F1_2 DOMAIN-CONTAINING PROTEIN"/>
    <property type="match status" value="1"/>
</dbReference>
<dbReference type="Pfam" id="PF00001">
    <property type="entry name" value="7tm_1"/>
    <property type="match status" value="1"/>
</dbReference>
<dbReference type="PRINTS" id="PR00571">
    <property type="entry name" value="ENDOTHELINBR"/>
</dbReference>
<dbReference type="PRINTS" id="PR00366">
    <property type="entry name" value="ENDOTHELINR"/>
</dbReference>
<dbReference type="PRINTS" id="PR00237">
    <property type="entry name" value="GPCRRHODOPSN"/>
</dbReference>
<dbReference type="SMART" id="SM01381">
    <property type="entry name" value="7TM_GPCR_Srsx"/>
    <property type="match status" value="1"/>
</dbReference>
<dbReference type="SUPFAM" id="SSF81321">
    <property type="entry name" value="Family A G protein-coupled receptor-like"/>
    <property type="match status" value="1"/>
</dbReference>
<dbReference type="PROSITE" id="PS00237">
    <property type="entry name" value="G_PROTEIN_RECEP_F1_1"/>
    <property type="match status" value="1"/>
</dbReference>
<dbReference type="PROSITE" id="PS50262">
    <property type="entry name" value="G_PROTEIN_RECEP_F1_2"/>
    <property type="match status" value="1"/>
</dbReference>